<dbReference type="GO" id="GO:0005576">
    <property type="term" value="C:extracellular region"/>
    <property type="evidence" value="ECO:0007669"/>
    <property type="project" value="UniProtKB-SubCell"/>
</dbReference>
<dbReference type="GO" id="GO:0090729">
    <property type="term" value="F:toxin activity"/>
    <property type="evidence" value="ECO:0007669"/>
    <property type="project" value="UniProtKB-KW"/>
</dbReference>
<dbReference type="FunFam" id="3.10.100.10:FF:000087">
    <property type="entry name" value="Snaclec rhodocetin subunit delta"/>
    <property type="match status" value="1"/>
</dbReference>
<dbReference type="Gene3D" id="3.10.100.10">
    <property type="entry name" value="Mannose-Binding Protein A, subunit A"/>
    <property type="match status" value="1"/>
</dbReference>
<dbReference type="InterPro" id="IPR001304">
    <property type="entry name" value="C-type_lectin-like"/>
</dbReference>
<dbReference type="InterPro" id="IPR016186">
    <property type="entry name" value="C-type_lectin-like/link_sf"/>
</dbReference>
<dbReference type="InterPro" id="IPR050111">
    <property type="entry name" value="C-type_lectin/snaclec_domain"/>
</dbReference>
<dbReference type="InterPro" id="IPR016187">
    <property type="entry name" value="CTDL_fold"/>
</dbReference>
<dbReference type="PANTHER" id="PTHR22803">
    <property type="entry name" value="MANNOSE, PHOSPHOLIPASE, LECTIN RECEPTOR RELATED"/>
    <property type="match status" value="1"/>
</dbReference>
<dbReference type="Pfam" id="PF00059">
    <property type="entry name" value="Lectin_C"/>
    <property type="match status" value="1"/>
</dbReference>
<dbReference type="SMART" id="SM00034">
    <property type="entry name" value="CLECT"/>
    <property type="match status" value="1"/>
</dbReference>
<dbReference type="SUPFAM" id="SSF56436">
    <property type="entry name" value="C-type lectin-like"/>
    <property type="match status" value="1"/>
</dbReference>
<dbReference type="PROSITE" id="PS50041">
    <property type="entry name" value="C_TYPE_LECTIN_2"/>
    <property type="match status" value="1"/>
</dbReference>
<sequence>GFDCPFGWSSYEGYCYKVYNKKMNWEDAESFCREQHKRSHLVSFHSSGEVDFVVSKTFPILRYDFVWMGLSDIWKECTKEWSDGARLDYKAWSGKSYCLVSKTTNNEWLSMDCSRTRYPVCKFXG</sequence>
<organism>
    <name type="scientific">Trimeresurus albolabris</name>
    <name type="common">White-lipped pit viper</name>
    <name type="synonym">Cryptelytrops albolabris</name>
    <dbReference type="NCBI Taxonomy" id="8765"/>
    <lineage>
        <taxon>Eukaryota</taxon>
        <taxon>Metazoa</taxon>
        <taxon>Chordata</taxon>
        <taxon>Craniata</taxon>
        <taxon>Vertebrata</taxon>
        <taxon>Euteleostomi</taxon>
        <taxon>Lepidosauria</taxon>
        <taxon>Squamata</taxon>
        <taxon>Bifurcata</taxon>
        <taxon>Unidentata</taxon>
        <taxon>Episquamata</taxon>
        <taxon>Toxicofera</taxon>
        <taxon>Serpentes</taxon>
        <taxon>Colubroidea</taxon>
        <taxon>Viperidae</taxon>
        <taxon>Crotalinae</taxon>
        <taxon>Trimeresurus</taxon>
    </lineage>
</organism>
<protein>
    <recommendedName>
        <fullName>Snaclec alboaggregin-A subunit beta</fullName>
    </recommendedName>
    <alternativeName>
        <fullName>Alboaggregin-A subunit 3</fullName>
        <shortName>AL-A subunit 3</shortName>
    </alternativeName>
</protein>
<keyword id="KW-0903">Direct protein sequencing</keyword>
<keyword id="KW-1015">Disulfide bond</keyword>
<keyword id="KW-1199">Hemostasis impairing toxin</keyword>
<keyword id="KW-1202">Platelet aggregation activating toxin</keyword>
<keyword id="KW-0964">Secreted</keyword>
<keyword id="KW-0800">Toxin</keyword>
<feature type="chain" id="PRO_0000046710" description="Snaclec alboaggregin-A subunit beta">
    <location>
        <begin position="1"/>
        <end position="125"/>
    </location>
</feature>
<feature type="domain" description="C-type lectin" evidence="1">
    <location>
        <begin position="1"/>
        <end position="125"/>
    </location>
</feature>
<feature type="disulfide bond" evidence="1">
    <location>
        <begin position="4"/>
        <end position="15"/>
    </location>
</feature>
<feature type="disulfide bond" evidence="1">
    <location>
        <begin position="32"/>
        <end position="121"/>
    </location>
</feature>
<feature type="disulfide bond" description="Interchain" evidence="1">
    <location>
        <position position="77"/>
    </location>
</feature>
<feature type="disulfide bond" evidence="1">
    <location>
        <begin position="98"/>
        <end position="113"/>
    </location>
</feature>
<name>SLA3_TRIAB</name>
<evidence type="ECO:0000255" key="1">
    <source>
        <dbReference type="PROSITE-ProRule" id="PRU00040"/>
    </source>
</evidence>
<evidence type="ECO:0000269" key="2">
    <source>
    </source>
</evidence>
<evidence type="ECO:0000269" key="3">
    <source>
    </source>
</evidence>
<evidence type="ECO:0000269" key="4">
    <source>
    </source>
</evidence>
<evidence type="ECO:0000269" key="5">
    <source>
    </source>
</evidence>
<evidence type="ECO:0000305" key="6"/>
<proteinExistence type="evidence at protein level"/>
<reference key="1">
    <citation type="journal article" date="1998" name="Thromb. Haemost.">
        <title>Alboaggregins A and B. Structure and interaction with human platelets.</title>
        <authorList>
            <person name="Kowalska M.A."/>
            <person name="Tan L."/>
            <person name="Holt J.C."/>
            <person name="Peng M."/>
            <person name="Karczewski J."/>
            <person name="Calvete J.J."/>
            <person name="Niewiarowski S."/>
        </authorList>
    </citation>
    <scope>PROTEIN SEQUENCE</scope>
    <scope>FUNCTION</scope>
    <source>
        <tissue>Venom</tissue>
    </source>
</reference>
<reference key="2">
    <citation type="journal article" date="2001" name="Blood">
        <title>Alboaggregin A activates platelets by a mechanism involving glycoprotein VI as well as glycoprotein Ib.</title>
        <authorList>
            <person name="Dormann D."/>
            <person name="Clemetson J.M."/>
            <person name="Navdaev A."/>
            <person name="Kehrel B.E."/>
            <person name="Clemetson K.J."/>
        </authorList>
    </citation>
    <scope>PARTIAL PROTEIN SEQUENCE</scope>
    <scope>FUNCTION</scope>
    <source>
        <tissue>Venom</tissue>
    </source>
</reference>
<reference key="3">
    <citation type="journal article" date="1996" name="Biochemistry">
        <title>Binding of a novel 50-kilodalton alboaggregin from Trimeresurus albolabris and related viper venom proteins to the platelet membrane glycoprotein Ib-IX-V complex. Effect on platelet aggregation and glycoprotein Ib-mediated platelet activation.</title>
        <authorList>
            <person name="Andrews R.K."/>
            <person name="Kroll M.H."/>
            <person name="Ward C.M."/>
            <person name="Rose J.W."/>
            <person name="Scarborough R.M."/>
            <person name="Smith A.I."/>
            <person name="Lopez J.A."/>
            <person name="Berndt M.C."/>
        </authorList>
    </citation>
    <scope>FUNCTION</scope>
    <scope>SUBCELLULAR LOCATION</scope>
    <scope>TISSUE SPECIFICITY</scope>
    <source>
        <tissue>Venom</tissue>
    </source>
</reference>
<reference key="4">
    <citation type="journal article" date="2001" name="Blood">
        <title>The snake venom toxin alboaggregin-A activates glycoprotein VI.</title>
        <authorList>
            <person name="Asazuma N."/>
            <person name="Marshall S.J."/>
            <person name="Berlanga O."/>
            <person name="Snell D."/>
            <person name="Poole A.W."/>
            <person name="Berndt M.C."/>
            <person name="Andrews R.K."/>
            <person name="Watson S.P."/>
        </authorList>
    </citation>
    <scope>FUNCTION</scope>
    <source>
        <tissue>Venom</tissue>
    </source>
</reference>
<accession>P81113</accession>
<comment type="function">
    <text evidence="2 3 4 5">Potent platelet activator that aggregates platelets via both GPIbalpha (GP1BA) and GPVI (GP6). Induces a tyrosine phosphorylation profile in platelets that resembles this produced by collagen, involving the time dependent tyrosine phosphorylation of Fc receptor gamma chain (FCGR1A), phospholipase Cgamma2 (PLCG2), and LAT.</text>
</comment>
<comment type="subunit">
    <text>Heterotetramer of the subunits alpha, alpha', beta and beta'; disulfide-linked.</text>
</comment>
<comment type="subcellular location">
    <subcellularLocation>
        <location evidence="4">Secreted</location>
    </subcellularLocation>
</comment>
<comment type="tissue specificity">
    <text evidence="4">Expressed by the venom gland.</text>
</comment>
<comment type="similarity">
    <text evidence="6">Belongs to the snaclec family.</text>
</comment>